<name>BRD9_DANRE</name>
<comment type="function">
    <text evidence="1">Plays a role in chromatin remodeling and regulation of transcription. Acts as a chromatin reader that recognizes and binds acylated histones: binds histones that are acetylated and/or butyrylated.</text>
</comment>
<comment type="subunit">
    <text evidence="1">Binds acetylated histones H3 and H4. Binds butyrylated histone H4.</text>
</comment>
<comment type="subcellular location">
    <subcellularLocation>
        <location evidence="1">Nucleus</location>
    </subcellularLocation>
</comment>
<comment type="domain">
    <text evidence="1">The Bromo domain mediates interaction with histones that have acetylated lysine residues at specific positions. Also recognizes and binds histones that are butyrylated.</text>
</comment>
<gene>
    <name type="primary">brd9</name>
</gene>
<evidence type="ECO:0000250" key="1">
    <source>
        <dbReference type="UniProtKB" id="Q9H8M2"/>
    </source>
</evidence>
<evidence type="ECO:0000255" key="2">
    <source>
        <dbReference type="PROSITE-ProRule" id="PRU00035"/>
    </source>
</evidence>
<evidence type="ECO:0000256" key="3">
    <source>
        <dbReference type="SAM" id="MobiDB-lite"/>
    </source>
</evidence>
<feature type="chain" id="PRO_0000239221" description="Bromodomain-containing protein 9">
    <location>
        <begin position="1"/>
        <end position="631"/>
    </location>
</feature>
<feature type="domain" description="Bromo" evidence="2">
    <location>
        <begin position="166"/>
        <end position="270"/>
    </location>
</feature>
<feature type="region of interest" description="Disordered" evidence="3">
    <location>
        <begin position="1"/>
        <end position="26"/>
    </location>
</feature>
<feature type="region of interest" description="Disordered" evidence="3">
    <location>
        <begin position="39"/>
        <end position="116"/>
    </location>
</feature>
<feature type="region of interest" description="Histone H4K5ac H4K8ac and histone H4K5bu H4K8bu binding" evidence="1">
    <location>
        <begin position="244"/>
        <end position="246"/>
    </location>
</feature>
<feature type="region of interest" description="Disordered" evidence="3">
    <location>
        <begin position="571"/>
        <end position="631"/>
    </location>
</feature>
<feature type="compositionally biased region" description="Basic and acidic residues" evidence="3">
    <location>
        <begin position="9"/>
        <end position="26"/>
    </location>
</feature>
<feature type="compositionally biased region" description="Basic and acidic residues" evidence="3">
    <location>
        <begin position="50"/>
        <end position="63"/>
    </location>
</feature>
<feature type="compositionally biased region" description="Basic residues" evidence="3">
    <location>
        <begin position="64"/>
        <end position="73"/>
    </location>
</feature>
<feature type="compositionally biased region" description="Basic and acidic residues" evidence="3">
    <location>
        <begin position="74"/>
        <end position="85"/>
    </location>
</feature>
<feature type="compositionally biased region" description="Basic residues" evidence="3">
    <location>
        <begin position="86"/>
        <end position="96"/>
    </location>
</feature>
<feature type="compositionally biased region" description="Low complexity" evidence="3">
    <location>
        <begin position="581"/>
        <end position="590"/>
    </location>
</feature>
<feature type="site" description="Histone H4K5ac H4K8ac and histone H4K5bu H4K8bu binding" evidence="1">
    <location>
        <position position="199"/>
    </location>
</feature>
<feature type="site" description="Histone H4K5ac H4K8ac and histone H4K5bu H4K8bu binding" evidence="1">
    <location>
        <position position="252"/>
    </location>
</feature>
<reference key="1">
    <citation type="submission" date="2003-03" db="EMBL/GenBank/DDBJ databases">
        <authorList>
            <consortium name="NIH - Zebrafish Gene Collection (ZGC) project"/>
        </authorList>
    </citation>
    <scope>NUCLEOTIDE SEQUENCE [LARGE SCALE MRNA]</scope>
    <source>
        <strain>AB</strain>
    </source>
</reference>
<keyword id="KW-0103">Bromodomain</keyword>
<keyword id="KW-0156">Chromatin regulator</keyword>
<keyword id="KW-0539">Nucleus</keyword>
<keyword id="KW-1185">Reference proteome</keyword>
<keyword id="KW-0804">Transcription</keyword>
<keyword id="KW-0805">Transcription regulation</keyword>
<sequence>MGKKHKKYRPEWRAVEGDYEDKPLEKPLKLVLKVGGSEVTELSGSGHDSSYYDDRSDHEWERHKEKKKKKKKKSEKEKYADDDERRRRKEEKKKKREREQSETASTAPVEPFTLPKPVEVVVEEKKRKRDKFESESEADEFHPAVKVEVEQPADRPVRACRTQQENEATPHQQLLEHFLRLLQRKDAHGFFAFPVTDAIAPGYSMIIKHPMDFSTMKDKIAANEYKTITEFKADFKLMCDNAMVYNRPETVYYKAAKKLLHTGFKMMSKQAAILGDDDIAPEEPVTEMMPIHTEYPKKSKKQPVKEPIISDMYELEGNACSLTDSTAEEHVLALVEHAADEARDRINRFMPNSKIGYLKKDTEGSLMYVVVNQDPEGEEEETHPVDLSSLANKLIPGLTSLGFKDDRRHKVTFLSSAYNTQTLQNNSIYPDLHPEEMDMLYSAYGDETGVQCALSLQEFVKGCGGFTKRLVDDLLDKMTAGDHSKAVVQIRQKRNLPIDEAKSSLCDMPGTDGGGMEAGSVLDFMSMKSYPDMSLDMLNTLGKCVKKEPEHEDGHQHFDDPTKLLQEFQDASVDRVGSRPSSNLSSLSNASERDQHHLGSSPHLGVGDQAEMVQDPYEFLQSPEPGSTANS</sequence>
<dbReference type="EMBL" id="BC049140">
    <property type="protein sequence ID" value="AAH49140.1"/>
    <property type="molecule type" value="mRNA"/>
</dbReference>
<dbReference type="RefSeq" id="NP_956569.1">
    <property type="nucleotide sequence ID" value="NM_200275.1"/>
</dbReference>
<dbReference type="SMR" id="Q7ZUF2"/>
<dbReference type="FunCoup" id="Q7ZUF2">
    <property type="interactions" value="2008"/>
</dbReference>
<dbReference type="STRING" id="7955.ENSDARP00000023970"/>
<dbReference type="PaxDb" id="7955-ENSDARP00000023970"/>
<dbReference type="GeneID" id="393245"/>
<dbReference type="KEGG" id="dre:393245"/>
<dbReference type="AGR" id="ZFIN:ZDB-GENE-060502-1"/>
<dbReference type="CTD" id="65980"/>
<dbReference type="ZFIN" id="ZDB-GENE-060502-1">
    <property type="gene designation" value="brd9"/>
</dbReference>
<dbReference type="eggNOG" id="KOG1828">
    <property type="taxonomic scope" value="Eukaryota"/>
</dbReference>
<dbReference type="InParanoid" id="Q7ZUF2"/>
<dbReference type="OrthoDB" id="21648at2759"/>
<dbReference type="PhylomeDB" id="Q7ZUF2"/>
<dbReference type="PRO" id="PR:Q7ZUF2"/>
<dbReference type="Proteomes" id="UP000000437">
    <property type="component" value="Chromosome 16"/>
</dbReference>
<dbReference type="GO" id="GO:0005634">
    <property type="term" value="C:nucleus"/>
    <property type="evidence" value="ECO:0000250"/>
    <property type="project" value="UniProtKB"/>
</dbReference>
<dbReference type="GO" id="GO:0070577">
    <property type="term" value="F:lysine-acetylated histone binding"/>
    <property type="evidence" value="ECO:0000250"/>
    <property type="project" value="UniProtKB"/>
</dbReference>
<dbReference type="GO" id="GO:0006325">
    <property type="term" value="P:chromatin organization"/>
    <property type="evidence" value="ECO:0007669"/>
    <property type="project" value="UniProtKB-KW"/>
</dbReference>
<dbReference type="GO" id="GO:0006357">
    <property type="term" value="P:regulation of transcription by RNA polymerase II"/>
    <property type="evidence" value="ECO:0000318"/>
    <property type="project" value="GO_Central"/>
</dbReference>
<dbReference type="CDD" id="cd05513">
    <property type="entry name" value="Bromo_brd7_like"/>
    <property type="match status" value="1"/>
</dbReference>
<dbReference type="FunFam" id="1.20.920.10:FF:000022">
    <property type="entry name" value="Putative bromodomain-containing protein 9"/>
    <property type="match status" value="1"/>
</dbReference>
<dbReference type="Gene3D" id="1.20.920.10">
    <property type="entry name" value="Bromodomain-like"/>
    <property type="match status" value="1"/>
</dbReference>
<dbReference type="InterPro" id="IPR001487">
    <property type="entry name" value="Bromodomain"/>
</dbReference>
<dbReference type="InterPro" id="IPR036427">
    <property type="entry name" value="Bromodomain-like_sf"/>
</dbReference>
<dbReference type="InterPro" id="IPR051831">
    <property type="entry name" value="Bromodomain_contain_prot"/>
</dbReference>
<dbReference type="InterPro" id="IPR021900">
    <property type="entry name" value="DUF3512"/>
</dbReference>
<dbReference type="PANTHER" id="PTHR22881">
    <property type="entry name" value="BROMODOMAIN CONTAINING PROTEIN"/>
    <property type="match status" value="1"/>
</dbReference>
<dbReference type="PANTHER" id="PTHR22881:SF4">
    <property type="entry name" value="BROMODOMAIN-CONTAINING PROTEIN 9"/>
    <property type="match status" value="1"/>
</dbReference>
<dbReference type="Pfam" id="PF00439">
    <property type="entry name" value="Bromodomain"/>
    <property type="match status" value="1"/>
</dbReference>
<dbReference type="Pfam" id="PF12024">
    <property type="entry name" value="DUF3512"/>
    <property type="match status" value="1"/>
</dbReference>
<dbReference type="PRINTS" id="PR00503">
    <property type="entry name" value="BROMODOMAIN"/>
</dbReference>
<dbReference type="SMART" id="SM00297">
    <property type="entry name" value="BROMO"/>
    <property type="match status" value="1"/>
</dbReference>
<dbReference type="SUPFAM" id="SSF47370">
    <property type="entry name" value="Bromodomain"/>
    <property type="match status" value="1"/>
</dbReference>
<dbReference type="PROSITE" id="PS50014">
    <property type="entry name" value="BROMODOMAIN_2"/>
    <property type="match status" value="1"/>
</dbReference>
<organism>
    <name type="scientific">Danio rerio</name>
    <name type="common">Zebrafish</name>
    <name type="synonym">Brachydanio rerio</name>
    <dbReference type="NCBI Taxonomy" id="7955"/>
    <lineage>
        <taxon>Eukaryota</taxon>
        <taxon>Metazoa</taxon>
        <taxon>Chordata</taxon>
        <taxon>Craniata</taxon>
        <taxon>Vertebrata</taxon>
        <taxon>Euteleostomi</taxon>
        <taxon>Actinopterygii</taxon>
        <taxon>Neopterygii</taxon>
        <taxon>Teleostei</taxon>
        <taxon>Ostariophysi</taxon>
        <taxon>Cypriniformes</taxon>
        <taxon>Danionidae</taxon>
        <taxon>Danioninae</taxon>
        <taxon>Danio</taxon>
    </lineage>
</organism>
<accession>Q7ZUF2</accession>
<proteinExistence type="evidence at transcript level"/>
<protein>
    <recommendedName>
        <fullName>Bromodomain-containing protein 9</fullName>
    </recommendedName>
</protein>